<sequence length="92" mass="9502">DLELRQCLPCGPGGKGRCFGPSICCGDELGCFVGTAEALRCQEENYLPSPCQSGQKPCGSGGRCAAAGICCNDESCVTEPECREGAGLPRRA</sequence>
<keyword id="KW-0903">Direct protein sequencing</keyword>
<keyword id="KW-1015">Disulfide bond</keyword>
<keyword id="KW-1185">Reference proteome</keyword>
<keyword id="KW-0964">Secreted</keyword>
<name>NEU2_HORSE</name>
<protein>
    <recommendedName>
        <fullName>Neurophysin 2</fullName>
    </recommendedName>
</protein>
<comment type="function">
    <text>Neurophysin 2 specifically binds the midbrain peptide hormone vasopressin.</text>
</comment>
<comment type="subcellular location">
    <subcellularLocation>
        <location>Secreted</location>
    </subcellularLocation>
</comment>
<comment type="similarity">
    <text evidence="2">Belongs to the vasopressin/oxytocin family.</text>
</comment>
<organism>
    <name type="scientific">Equus caballus</name>
    <name type="common">Horse</name>
    <dbReference type="NCBI Taxonomy" id="9796"/>
    <lineage>
        <taxon>Eukaryota</taxon>
        <taxon>Metazoa</taxon>
        <taxon>Chordata</taxon>
        <taxon>Craniata</taxon>
        <taxon>Vertebrata</taxon>
        <taxon>Euteleostomi</taxon>
        <taxon>Mammalia</taxon>
        <taxon>Eutheria</taxon>
        <taxon>Laurasiatheria</taxon>
        <taxon>Perissodactyla</taxon>
        <taxon>Equidae</taxon>
        <taxon>Equus</taxon>
    </lineage>
</organism>
<reference key="1">
    <citation type="journal article" date="1977" name="FEBS Lett.">
        <title>Phylogeny of the neurophysins: complete amino acid sequence of horse MSEL-neurophysin.</title>
        <authorList>
            <person name="Chauvet M.-T."/>
            <person name="Codogno P."/>
            <person name="Chauvet J."/>
            <person name="Acher R."/>
        </authorList>
    </citation>
    <scope>PROTEIN SEQUENCE</scope>
</reference>
<dbReference type="PIR" id="A01444">
    <property type="entry name" value="NFHO2"/>
</dbReference>
<dbReference type="SMR" id="P01182"/>
<dbReference type="STRING" id="9796.ENSECAP00000022402"/>
<dbReference type="PaxDb" id="9796-ENSECAP00000044610"/>
<dbReference type="InParanoid" id="P01182"/>
<dbReference type="Proteomes" id="UP000002281">
    <property type="component" value="Unplaced"/>
</dbReference>
<dbReference type="GO" id="GO:0005615">
    <property type="term" value="C:extracellular space"/>
    <property type="evidence" value="ECO:0000318"/>
    <property type="project" value="GO_Central"/>
</dbReference>
<dbReference type="GO" id="GO:0030141">
    <property type="term" value="C:secretory granule"/>
    <property type="evidence" value="ECO:0000318"/>
    <property type="project" value="GO_Central"/>
</dbReference>
<dbReference type="GO" id="GO:0005185">
    <property type="term" value="F:neurohypophyseal hormone activity"/>
    <property type="evidence" value="ECO:0007669"/>
    <property type="project" value="InterPro"/>
</dbReference>
<dbReference type="GO" id="GO:0005184">
    <property type="term" value="F:neuropeptide hormone activity"/>
    <property type="evidence" value="ECO:0000318"/>
    <property type="project" value="GO_Central"/>
</dbReference>
<dbReference type="GO" id="GO:0031894">
    <property type="term" value="F:V1A vasopressin receptor binding"/>
    <property type="evidence" value="ECO:0000318"/>
    <property type="project" value="GO_Central"/>
</dbReference>
<dbReference type="FunFam" id="2.60.9.10:FF:000001">
    <property type="entry name" value="oxytocin-neurophysin 1"/>
    <property type="match status" value="1"/>
</dbReference>
<dbReference type="Gene3D" id="2.60.9.10">
    <property type="entry name" value="Neurohypophysial hormone domain"/>
    <property type="match status" value="1"/>
</dbReference>
<dbReference type="InterPro" id="IPR000981">
    <property type="entry name" value="Neurhyp_horm"/>
</dbReference>
<dbReference type="InterPro" id="IPR036387">
    <property type="entry name" value="Neurhyp_horm_dom_sf"/>
</dbReference>
<dbReference type="PANTHER" id="PTHR11681">
    <property type="entry name" value="NEUROPHYSIN"/>
    <property type="match status" value="1"/>
</dbReference>
<dbReference type="PANTHER" id="PTHR11681:SF9">
    <property type="entry name" value="VASOPRESSIN-NEUROPHYSIN 2-COPEPTIN"/>
    <property type="match status" value="1"/>
</dbReference>
<dbReference type="Pfam" id="PF00184">
    <property type="entry name" value="Hormone_5"/>
    <property type="match status" value="1"/>
</dbReference>
<dbReference type="PRINTS" id="PR00831">
    <property type="entry name" value="NEUROPHYSIN"/>
</dbReference>
<dbReference type="SMART" id="SM00003">
    <property type="entry name" value="NH"/>
    <property type="match status" value="1"/>
</dbReference>
<dbReference type="SUPFAM" id="SSF49606">
    <property type="entry name" value="Neurophysin II"/>
    <property type="match status" value="1"/>
</dbReference>
<feature type="chain" id="PRO_0000160936" description="Neurophysin 2">
    <location>
        <begin position="1" status="less than"/>
        <end position="92"/>
    </location>
</feature>
<feature type="disulfide bond" evidence="1">
    <location>
        <begin position="7"/>
        <end position="51"/>
    </location>
</feature>
<feature type="disulfide bond" evidence="1">
    <location>
        <begin position="10"/>
        <end position="24"/>
    </location>
</feature>
<feature type="disulfide bond" evidence="1">
    <location>
        <begin position="18"/>
        <end position="41"/>
    </location>
</feature>
<feature type="disulfide bond" evidence="1">
    <location>
        <begin position="25"/>
        <end position="31"/>
    </location>
</feature>
<feature type="disulfide bond" evidence="1">
    <location>
        <begin position="58"/>
        <end position="70"/>
    </location>
</feature>
<feature type="disulfide bond" evidence="1">
    <location>
        <begin position="64"/>
        <end position="82"/>
    </location>
</feature>
<feature type="disulfide bond" evidence="1">
    <location>
        <begin position="71"/>
        <end position="76"/>
    </location>
</feature>
<feature type="non-terminal residue">
    <location>
        <position position="1"/>
    </location>
</feature>
<evidence type="ECO:0000250" key="1">
    <source>
        <dbReference type="UniProtKB" id="P01175"/>
    </source>
</evidence>
<evidence type="ECO:0000305" key="2"/>
<gene>
    <name type="primary">AVP</name>
</gene>
<proteinExistence type="evidence at protein level"/>
<accession>P01182</accession>